<organism>
    <name type="scientific">Caulobacter vibrioides (strain NA1000 / CB15N)</name>
    <name type="common">Caulobacter crescentus</name>
    <dbReference type="NCBI Taxonomy" id="565050"/>
    <lineage>
        <taxon>Bacteria</taxon>
        <taxon>Pseudomonadati</taxon>
        <taxon>Pseudomonadota</taxon>
        <taxon>Alphaproteobacteria</taxon>
        <taxon>Caulobacterales</taxon>
        <taxon>Caulobacteraceae</taxon>
        <taxon>Caulobacter</taxon>
    </lineage>
</organism>
<keyword id="KW-0067">ATP-binding</keyword>
<keyword id="KW-0963">Cytoplasm</keyword>
<keyword id="KW-0418">Kinase</keyword>
<keyword id="KW-0460">Magnesium</keyword>
<keyword id="KW-0479">Metal-binding</keyword>
<keyword id="KW-0545">Nucleotide biosynthesis</keyword>
<keyword id="KW-0547">Nucleotide-binding</keyword>
<keyword id="KW-1185">Reference proteome</keyword>
<keyword id="KW-0808">Transferase</keyword>
<protein>
    <recommendedName>
        <fullName evidence="1">Ribose-phosphate pyrophosphokinase</fullName>
        <shortName evidence="1">RPPK</shortName>
        <ecNumber evidence="1">2.7.6.1</ecNumber>
    </recommendedName>
    <alternativeName>
        <fullName evidence="1">5-phospho-D-ribosyl alpha-1-diphosphate synthase</fullName>
    </alternativeName>
    <alternativeName>
        <fullName evidence="1">Phosphoribosyl diphosphate synthase</fullName>
    </alternativeName>
    <alternativeName>
        <fullName evidence="1">Phosphoribosyl pyrophosphate synthase</fullName>
        <shortName evidence="1">P-Rib-PP synthase</shortName>
        <shortName evidence="1">PRPP synthase</shortName>
        <shortName evidence="1">PRPPase</shortName>
    </alternativeName>
</protein>
<accession>B8GZV1</accession>
<proteinExistence type="inferred from homology"/>
<evidence type="ECO:0000255" key="1">
    <source>
        <dbReference type="HAMAP-Rule" id="MF_00583"/>
    </source>
</evidence>
<feature type="chain" id="PRO_1000146934" description="Ribose-phosphate pyrophosphokinase">
    <location>
        <begin position="1"/>
        <end position="312"/>
    </location>
</feature>
<feature type="active site" evidence="1">
    <location>
        <position position="192"/>
    </location>
</feature>
<feature type="binding site" evidence="1">
    <location>
        <begin position="34"/>
        <end position="36"/>
    </location>
    <ligand>
        <name>ATP</name>
        <dbReference type="ChEBI" id="CHEBI:30616"/>
    </ligand>
</feature>
<feature type="binding site" evidence="1">
    <location>
        <begin position="93"/>
        <end position="94"/>
    </location>
    <ligand>
        <name>ATP</name>
        <dbReference type="ChEBI" id="CHEBI:30616"/>
    </ligand>
</feature>
<feature type="binding site" evidence="1">
    <location>
        <position position="127"/>
    </location>
    <ligand>
        <name>Mg(2+)</name>
        <dbReference type="ChEBI" id="CHEBI:18420"/>
        <label>1</label>
    </ligand>
</feature>
<feature type="binding site" evidence="1">
    <location>
        <position position="168"/>
    </location>
    <ligand>
        <name>Mg(2+)</name>
        <dbReference type="ChEBI" id="CHEBI:18420"/>
        <label>2</label>
    </ligand>
</feature>
<feature type="binding site" evidence="1">
    <location>
        <position position="194"/>
    </location>
    <ligand>
        <name>D-ribose 5-phosphate</name>
        <dbReference type="ChEBI" id="CHEBI:78346"/>
    </ligand>
</feature>
<feature type="binding site" evidence="1">
    <location>
        <position position="218"/>
    </location>
    <ligand>
        <name>D-ribose 5-phosphate</name>
        <dbReference type="ChEBI" id="CHEBI:78346"/>
    </ligand>
</feature>
<feature type="binding site" evidence="1">
    <location>
        <begin position="222"/>
        <end position="226"/>
    </location>
    <ligand>
        <name>D-ribose 5-phosphate</name>
        <dbReference type="ChEBI" id="CHEBI:78346"/>
    </ligand>
</feature>
<comment type="function">
    <text evidence="1">Involved in the biosynthesis of the central metabolite phospho-alpha-D-ribosyl-1-pyrophosphate (PRPP) via the transfer of pyrophosphoryl group from ATP to 1-hydroxyl of ribose-5-phosphate (Rib-5-P).</text>
</comment>
<comment type="catalytic activity">
    <reaction evidence="1">
        <text>D-ribose 5-phosphate + ATP = 5-phospho-alpha-D-ribose 1-diphosphate + AMP + H(+)</text>
        <dbReference type="Rhea" id="RHEA:15609"/>
        <dbReference type="ChEBI" id="CHEBI:15378"/>
        <dbReference type="ChEBI" id="CHEBI:30616"/>
        <dbReference type="ChEBI" id="CHEBI:58017"/>
        <dbReference type="ChEBI" id="CHEBI:78346"/>
        <dbReference type="ChEBI" id="CHEBI:456215"/>
        <dbReference type="EC" id="2.7.6.1"/>
    </reaction>
</comment>
<comment type="cofactor">
    <cofactor evidence="1">
        <name>Mg(2+)</name>
        <dbReference type="ChEBI" id="CHEBI:18420"/>
    </cofactor>
    <text evidence="1">Binds 2 Mg(2+) ions per subunit.</text>
</comment>
<comment type="pathway">
    <text evidence="1">Metabolic intermediate biosynthesis; 5-phospho-alpha-D-ribose 1-diphosphate biosynthesis; 5-phospho-alpha-D-ribose 1-diphosphate from D-ribose 5-phosphate (route I): step 1/1.</text>
</comment>
<comment type="subunit">
    <text evidence="1">Homohexamer.</text>
</comment>
<comment type="subcellular location">
    <subcellularLocation>
        <location evidence="1">Cytoplasm</location>
    </subcellularLocation>
</comment>
<comment type="similarity">
    <text evidence="1">Belongs to the ribose-phosphate pyrophosphokinase family. Class I subfamily.</text>
</comment>
<name>KPRS_CAUVN</name>
<gene>
    <name evidence="1" type="primary">prs</name>
    <name type="ordered locus">CCNA_00520</name>
</gene>
<sequence>MKLLSGNSNRPLSQAIAEYLDMPLTRAQVRRFADLEVFVTIDENVRGEDVFVIQSTSYPANDNLMELLICIDALKRASGKRITAVIPYFGYARQDRKTGGRTPISAKLVANLITRSGADRVLTMDLHAGQIQGFFDIPTDNLLPSRLMAEDIRRHYPMGDDLMVVSPDVGGVVRARALAKRLDDADLAIVDKRRSGPGQSEVMNIIGDVKDRRCILFDDIADSAGTLCNAAQALMAHGAKSVSAYITHGVLSGAAADRVANSVLTELVVTDSIEASDPAKACPKIRYVSCAPLIGEAIRRIANEESVSKLFD</sequence>
<dbReference type="EC" id="2.7.6.1" evidence="1"/>
<dbReference type="EMBL" id="CP001340">
    <property type="protein sequence ID" value="ACL93985.1"/>
    <property type="molecule type" value="Genomic_DNA"/>
</dbReference>
<dbReference type="RefSeq" id="WP_010918375.1">
    <property type="nucleotide sequence ID" value="NC_011916.1"/>
</dbReference>
<dbReference type="RefSeq" id="YP_002515893.1">
    <property type="nucleotide sequence ID" value="NC_011916.1"/>
</dbReference>
<dbReference type="SMR" id="B8GZV1"/>
<dbReference type="GeneID" id="7332210"/>
<dbReference type="KEGG" id="ccs:CCNA_00520"/>
<dbReference type="PATRIC" id="fig|565050.3.peg.512"/>
<dbReference type="HOGENOM" id="CLU_033546_4_0_5"/>
<dbReference type="OrthoDB" id="9777067at2"/>
<dbReference type="PhylomeDB" id="B8GZV1"/>
<dbReference type="UniPathway" id="UPA00087">
    <property type="reaction ID" value="UER00172"/>
</dbReference>
<dbReference type="Proteomes" id="UP000001364">
    <property type="component" value="Chromosome"/>
</dbReference>
<dbReference type="GO" id="GO:0005737">
    <property type="term" value="C:cytoplasm"/>
    <property type="evidence" value="ECO:0007669"/>
    <property type="project" value="UniProtKB-SubCell"/>
</dbReference>
<dbReference type="GO" id="GO:0002189">
    <property type="term" value="C:ribose phosphate diphosphokinase complex"/>
    <property type="evidence" value="ECO:0007669"/>
    <property type="project" value="TreeGrafter"/>
</dbReference>
<dbReference type="GO" id="GO:0005524">
    <property type="term" value="F:ATP binding"/>
    <property type="evidence" value="ECO:0007669"/>
    <property type="project" value="UniProtKB-KW"/>
</dbReference>
<dbReference type="GO" id="GO:0016301">
    <property type="term" value="F:kinase activity"/>
    <property type="evidence" value="ECO:0007669"/>
    <property type="project" value="UniProtKB-KW"/>
</dbReference>
<dbReference type="GO" id="GO:0000287">
    <property type="term" value="F:magnesium ion binding"/>
    <property type="evidence" value="ECO:0007669"/>
    <property type="project" value="UniProtKB-UniRule"/>
</dbReference>
<dbReference type="GO" id="GO:0004749">
    <property type="term" value="F:ribose phosphate diphosphokinase activity"/>
    <property type="evidence" value="ECO:0007669"/>
    <property type="project" value="UniProtKB-UniRule"/>
</dbReference>
<dbReference type="GO" id="GO:0006015">
    <property type="term" value="P:5-phosphoribose 1-diphosphate biosynthetic process"/>
    <property type="evidence" value="ECO:0007669"/>
    <property type="project" value="UniProtKB-UniRule"/>
</dbReference>
<dbReference type="GO" id="GO:0006164">
    <property type="term" value="P:purine nucleotide biosynthetic process"/>
    <property type="evidence" value="ECO:0007669"/>
    <property type="project" value="TreeGrafter"/>
</dbReference>
<dbReference type="GO" id="GO:0009156">
    <property type="term" value="P:ribonucleoside monophosphate biosynthetic process"/>
    <property type="evidence" value="ECO:0007669"/>
    <property type="project" value="InterPro"/>
</dbReference>
<dbReference type="CDD" id="cd06223">
    <property type="entry name" value="PRTases_typeI"/>
    <property type="match status" value="1"/>
</dbReference>
<dbReference type="FunFam" id="3.40.50.2020:FF:000001">
    <property type="entry name" value="Ribose-phosphate pyrophosphokinase"/>
    <property type="match status" value="1"/>
</dbReference>
<dbReference type="Gene3D" id="3.40.50.2020">
    <property type="match status" value="2"/>
</dbReference>
<dbReference type="HAMAP" id="MF_00583_B">
    <property type="entry name" value="RibP_PPkinase_B"/>
    <property type="match status" value="1"/>
</dbReference>
<dbReference type="InterPro" id="IPR000842">
    <property type="entry name" value="PRib_PP_synth_CS"/>
</dbReference>
<dbReference type="InterPro" id="IPR029099">
    <property type="entry name" value="Pribosyltran_N"/>
</dbReference>
<dbReference type="InterPro" id="IPR000836">
    <property type="entry name" value="PRibTrfase_dom"/>
</dbReference>
<dbReference type="InterPro" id="IPR029057">
    <property type="entry name" value="PRTase-like"/>
</dbReference>
<dbReference type="InterPro" id="IPR005946">
    <property type="entry name" value="Rib-P_diPkinase"/>
</dbReference>
<dbReference type="InterPro" id="IPR037515">
    <property type="entry name" value="Rib-P_diPkinase_bac"/>
</dbReference>
<dbReference type="NCBIfam" id="NF002320">
    <property type="entry name" value="PRK01259.1"/>
    <property type="match status" value="1"/>
</dbReference>
<dbReference type="NCBIfam" id="TIGR01251">
    <property type="entry name" value="ribP_PPkin"/>
    <property type="match status" value="1"/>
</dbReference>
<dbReference type="PANTHER" id="PTHR10210">
    <property type="entry name" value="RIBOSE-PHOSPHATE DIPHOSPHOKINASE FAMILY MEMBER"/>
    <property type="match status" value="1"/>
</dbReference>
<dbReference type="PANTHER" id="PTHR10210:SF41">
    <property type="entry name" value="RIBOSE-PHOSPHATE PYROPHOSPHOKINASE 1, CHLOROPLASTIC"/>
    <property type="match status" value="1"/>
</dbReference>
<dbReference type="Pfam" id="PF14572">
    <property type="entry name" value="Pribosyl_synth"/>
    <property type="match status" value="1"/>
</dbReference>
<dbReference type="Pfam" id="PF13793">
    <property type="entry name" value="Pribosyltran_N"/>
    <property type="match status" value="1"/>
</dbReference>
<dbReference type="SMART" id="SM01400">
    <property type="entry name" value="Pribosyltran_N"/>
    <property type="match status" value="1"/>
</dbReference>
<dbReference type="SUPFAM" id="SSF53271">
    <property type="entry name" value="PRTase-like"/>
    <property type="match status" value="1"/>
</dbReference>
<dbReference type="PROSITE" id="PS00114">
    <property type="entry name" value="PRPP_SYNTHASE"/>
    <property type="match status" value="1"/>
</dbReference>
<reference key="1">
    <citation type="journal article" date="2010" name="J. Bacteriol.">
        <title>The genetic basis of laboratory adaptation in Caulobacter crescentus.</title>
        <authorList>
            <person name="Marks M.E."/>
            <person name="Castro-Rojas C.M."/>
            <person name="Teiling C."/>
            <person name="Du L."/>
            <person name="Kapatral V."/>
            <person name="Walunas T.L."/>
            <person name="Crosson S."/>
        </authorList>
    </citation>
    <scope>NUCLEOTIDE SEQUENCE [LARGE SCALE GENOMIC DNA]</scope>
    <source>
        <strain>NA1000 / CB15N</strain>
    </source>
</reference>